<organism>
    <name type="scientific">Eremothecium gossypii (strain ATCC 10895 / CBS 109.51 / FGSC 9923 / NRRL Y-1056)</name>
    <name type="common">Yeast</name>
    <name type="synonym">Ashbya gossypii</name>
    <dbReference type="NCBI Taxonomy" id="284811"/>
    <lineage>
        <taxon>Eukaryota</taxon>
        <taxon>Fungi</taxon>
        <taxon>Dikarya</taxon>
        <taxon>Ascomycota</taxon>
        <taxon>Saccharomycotina</taxon>
        <taxon>Saccharomycetes</taxon>
        <taxon>Saccharomycetales</taxon>
        <taxon>Saccharomycetaceae</taxon>
        <taxon>Eremothecium</taxon>
    </lineage>
</organism>
<name>ATG18_EREGS</name>
<feature type="chain" id="PRO_0000050860" description="Autophagy-related protein 18">
    <location>
        <begin position="1"/>
        <end position="537"/>
    </location>
</feature>
<feature type="repeat" description="WD 1">
    <location>
        <begin position="257"/>
        <end position="297"/>
    </location>
</feature>
<feature type="repeat" description="WD 2">
    <location>
        <begin position="302"/>
        <end position="341"/>
    </location>
</feature>
<feature type="region of interest" description="Disordered" evidence="3">
    <location>
        <begin position="184"/>
        <end position="230"/>
    </location>
</feature>
<feature type="region of interest" description="Disordered" evidence="3">
    <location>
        <begin position="338"/>
        <end position="411"/>
    </location>
</feature>
<feature type="short sequence motif" description="L/FRRG motif" evidence="2">
    <location>
        <begin position="298"/>
        <end position="302"/>
    </location>
</feature>
<feature type="compositionally biased region" description="Polar residues" evidence="3">
    <location>
        <begin position="207"/>
        <end position="216"/>
    </location>
</feature>
<feature type="compositionally biased region" description="Low complexity" evidence="3">
    <location>
        <begin position="338"/>
        <end position="347"/>
    </location>
</feature>
<feature type="compositionally biased region" description="Acidic residues" evidence="3">
    <location>
        <begin position="348"/>
        <end position="369"/>
    </location>
</feature>
<feature type="compositionally biased region" description="Polar residues" evidence="3">
    <location>
        <begin position="374"/>
        <end position="386"/>
    </location>
</feature>
<feature type="compositionally biased region" description="Basic and acidic residues" evidence="3">
    <location>
        <begin position="387"/>
        <end position="397"/>
    </location>
</feature>
<protein>
    <recommendedName>
        <fullName>Autophagy-related protein 18</fullName>
    </recommendedName>
</protein>
<accession>Q75F47</accession>
<proteinExistence type="inferred from homology"/>
<evidence type="ECO:0000250" key="1"/>
<evidence type="ECO:0000250" key="2">
    <source>
        <dbReference type="UniProtKB" id="P43601"/>
    </source>
</evidence>
<evidence type="ECO:0000256" key="3">
    <source>
        <dbReference type="SAM" id="MobiDB-lite"/>
    </source>
</evidence>
<evidence type="ECO:0000305" key="4"/>
<dbReference type="EMBL" id="AE016814">
    <property type="protein sequence ID" value="AAS50247.1"/>
    <property type="molecule type" value="Genomic_DNA"/>
</dbReference>
<dbReference type="RefSeq" id="NP_982423.1">
    <property type="nucleotide sequence ID" value="NM_207776.1"/>
</dbReference>
<dbReference type="SMR" id="Q75F47"/>
<dbReference type="FunCoup" id="Q75F47">
    <property type="interactions" value="580"/>
</dbReference>
<dbReference type="STRING" id="284811.Q75F47"/>
<dbReference type="EnsemblFungi" id="AAS50247">
    <property type="protein sequence ID" value="AAS50247"/>
    <property type="gene ID" value="AGOS_AAL119W"/>
</dbReference>
<dbReference type="GeneID" id="4618581"/>
<dbReference type="KEGG" id="ago:AGOS_AAL119W"/>
<dbReference type="eggNOG" id="KOG2110">
    <property type="taxonomic scope" value="Eukaryota"/>
</dbReference>
<dbReference type="HOGENOM" id="CLU_025895_5_2_1"/>
<dbReference type="InParanoid" id="Q75F47"/>
<dbReference type="OMA" id="KTMGRMI"/>
<dbReference type="OrthoDB" id="1667587at2759"/>
<dbReference type="Proteomes" id="UP000000591">
    <property type="component" value="Chromosome I"/>
</dbReference>
<dbReference type="GO" id="GO:0005829">
    <property type="term" value="C:cytosol"/>
    <property type="evidence" value="ECO:0000318"/>
    <property type="project" value="GO_Central"/>
</dbReference>
<dbReference type="GO" id="GO:0010008">
    <property type="term" value="C:endosome membrane"/>
    <property type="evidence" value="ECO:0007669"/>
    <property type="project" value="UniProtKB-SubCell"/>
</dbReference>
<dbReference type="GO" id="GO:0000329">
    <property type="term" value="C:fungal-type vacuole membrane"/>
    <property type="evidence" value="ECO:0000318"/>
    <property type="project" value="GO_Central"/>
</dbReference>
<dbReference type="GO" id="GO:0070772">
    <property type="term" value="C:PAS complex"/>
    <property type="evidence" value="ECO:0007669"/>
    <property type="project" value="EnsemblFungi"/>
</dbReference>
<dbReference type="GO" id="GO:0061908">
    <property type="term" value="C:phagophore"/>
    <property type="evidence" value="ECO:0007669"/>
    <property type="project" value="EnsemblFungi"/>
</dbReference>
<dbReference type="GO" id="GO:0034045">
    <property type="term" value="C:phagophore assembly site membrane"/>
    <property type="evidence" value="ECO:0000318"/>
    <property type="project" value="GO_Central"/>
</dbReference>
<dbReference type="GO" id="GO:0080025">
    <property type="term" value="F:phosphatidylinositol-3,5-bisphosphate binding"/>
    <property type="evidence" value="ECO:0000318"/>
    <property type="project" value="GO_Central"/>
</dbReference>
<dbReference type="GO" id="GO:0032266">
    <property type="term" value="F:phosphatidylinositol-3-phosphate binding"/>
    <property type="evidence" value="ECO:0000318"/>
    <property type="project" value="GO_Central"/>
</dbReference>
<dbReference type="GO" id="GO:0070273">
    <property type="term" value="F:phosphatidylinositol-4-phosphate binding"/>
    <property type="evidence" value="ECO:0007669"/>
    <property type="project" value="EnsemblFungi"/>
</dbReference>
<dbReference type="GO" id="GO:0030674">
    <property type="term" value="F:protein-macromolecule adaptor activity"/>
    <property type="evidence" value="ECO:0000318"/>
    <property type="project" value="GO_Central"/>
</dbReference>
<dbReference type="GO" id="GO:0043130">
    <property type="term" value="F:ubiquitin binding"/>
    <property type="evidence" value="ECO:0007669"/>
    <property type="project" value="EnsemblFungi"/>
</dbReference>
<dbReference type="GO" id="GO:0000422">
    <property type="term" value="P:autophagy of mitochondrion"/>
    <property type="evidence" value="ECO:0000318"/>
    <property type="project" value="GO_Central"/>
</dbReference>
<dbReference type="GO" id="GO:0032258">
    <property type="term" value="P:cytoplasm to vacuole targeting by the Cvt pathway"/>
    <property type="evidence" value="ECO:0007669"/>
    <property type="project" value="EnsemblFungi"/>
</dbReference>
<dbReference type="GO" id="GO:0061723">
    <property type="term" value="P:glycophagy"/>
    <property type="evidence" value="ECO:0000318"/>
    <property type="project" value="GO_Central"/>
</dbReference>
<dbReference type="GO" id="GO:0045324">
    <property type="term" value="P:late endosome to vacuole transport"/>
    <property type="evidence" value="ECO:0007669"/>
    <property type="project" value="EnsemblFungi"/>
</dbReference>
<dbReference type="GO" id="GO:0044804">
    <property type="term" value="P:nucleophagy"/>
    <property type="evidence" value="ECO:0000318"/>
    <property type="project" value="GO_Central"/>
</dbReference>
<dbReference type="GO" id="GO:0000425">
    <property type="term" value="P:pexophagy"/>
    <property type="evidence" value="ECO:0000318"/>
    <property type="project" value="GO_Central"/>
</dbReference>
<dbReference type="GO" id="GO:0034727">
    <property type="term" value="P:piecemeal microautophagy of the nucleus"/>
    <property type="evidence" value="ECO:0007669"/>
    <property type="project" value="EnsemblFungi"/>
</dbReference>
<dbReference type="GO" id="GO:0044090">
    <property type="term" value="P:positive regulation of vacuole organization"/>
    <property type="evidence" value="ECO:0007669"/>
    <property type="project" value="EnsemblFungi"/>
</dbReference>
<dbReference type="GO" id="GO:0034497">
    <property type="term" value="P:protein localization to phagophore assembly site"/>
    <property type="evidence" value="ECO:0000318"/>
    <property type="project" value="GO_Central"/>
</dbReference>
<dbReference type="GO" id="GO:0006624">
    <property type="term" value="P:vacuolar protein processing"/>
    <property type="evidence" value="ECO:0007669"/>
    <property type="project" value="EnsemblFungi"/>
</dbReference>
<dbReference type="Gene3D" id="2.130.10.10">
    <property type="entry name" value="YVTN repeat-like/Quinoprotein amine dehydrogenase"/>
    <property type="match status" value="1"/>
</dbReference>
<dbReference type="InterPro" id="IPR048720">
    <property type="entry name" value="PROPPIN"/>
</dbReference>
<dbReference type="InterPro" id="IPR015943">
    <property type="entry name" value="WD40/YVTN_repeat-like_dom_sf"/>
</dbReference>
<dbReference type="InterPro" id="IPR036322">
    <property type="entry name" value="WD40_repeat_dom_sf"/>
</dbReference>
<dbReference type="InterPro" id="IPR001680">
    <property type="entry name" value="WD40_rpt"/>
</dbReference>
<dbReference type="PANTHER" id="PTHR11227">
    <property type="entry name" value="WD-REPEAT PROTEIN INTERACTING WITH PHOSPHOINOSIDES WIPI -RELATED"/>
    <property type="match status" value="1"/>
</dbReference>
<dbReference type="Pfam" id="PF21032">
    <property type="entry name" value="PROPPIN"/>
    <property type="match status" value="2"/>
</dbReference>
<dbReference type="SMART" id="SM00320">
    <property type="entry name" value="WD40"/>
    <property type="match status" value="2"/>
</dbReference>
<dbReference type="SUPFAM" id="SSF50978">
    <property type="entry name" value="WD40 repeat-like"/>
    <property type="match status" value="1"/>
</dbReference>
<dbReference type="PROSITE" id="PS50294">
    <property type="entry name" value="WD_REPEATS_REGION"/>
    <property type="match status" value="1"/>
</dbReference>
<reference key="1">
    <citation type="journal article" date="2004" name="Science">
        <title>The Ashbya gossypii genome as a tool for mapping the ancient Saccharomyces cerevisiae genome.</title>
        <authorList>
            <person name="Dietrich F.S."/>
            <person name="Voegeli S."/>
            <person name="Brachat S."/>
            <person name="Lerch A."/>
            <person name="Gates K."/>
            <person name="Steiner S."/>
            <person name="Mohr C."/>
            <person name="Poehlmann R."/>
            <person name="Luedi P."/>
            <person name="Choi S."/>
            <person name="Wing R.A."/>
            <person name="Flavier A."/>
            <person name="Gaffney T.D."/>
            <person name="Philippsen P."/>
        </authorList>
    </citation>
    <scope>NUCLEOTIDE SEQUENCE [LARGE SCALE GENOMIC DNA]</scope>
    <source>
        <strain>ATCC 10895 / CBS 109.51 / FGSC 9923 / NRRL Y-1056</strain>
    </source>
</reference>
<reference key="2">
    <citation type="journal article" date="2013" name="G3 (Bethesda)">
        <title>Genomes of Ashbya fungi isolated from insects reveal four mating-type loci, numerous translocations, lack of transposons, and distinct gene duplications.</title>
        <authorList>
            <person name="Dietrich F.S."/>
            <person name="Voegeli S."/>
            <person name="Kuo S."/>
            <person name="Philippsen P."/>
        </authorList>
    </citation>
    <scope>GENOME REANNOTATION</scope>
    <source>
        <strain>ATCC 10895 / CBS 109.51 / FGSC 9923 / NRRL Y-1056</strain>
    </source>
</reference>
<keyword id="KW-0072">Autophagy</keyword>
<keyword id="KW-0967">Endosome</keyword>
<keyword id="KW-0472">Membrane</keyword>
<keyword id="KW-0653">Protein transport</keyword>
<keyword id="KW-1185">Reference proteome</keyword>
<keyword id="KW-0677">Repeat</keyword>
<keyword id="KW-0813">Transport</keyword>
<keyword id="KW-0926">Vacuole</keyword>
<keyword id="KW-0853">WD repeat</keyword>
<sequence>MSRTGMPVINFINFNQTGTCISMGTSEGLKIFNCDPFGRFYSDEDGGCGIVEMLFSTSLLAVVGIGDNPSMSPRRLRILNTKRHSVICEVTFPTTILAVKMNRSRLVVLLQEQIYIYDINSMRLLYTIETSSNPRGLISMSPSLENNYLAYPSPPKVINSGIKSNANTNNIGISARSSIAEGGSEYLDKGTEPLTDSSKAGADLNSVKASTETTISPGKEHSAGSGLNATSSSGTVKNGDVIFFNLQTLQPTMVIEAHKGEIAALALSKDGTLLATASEKGTIIRVFSVETCTKVYQFRRGTYPTRIYSLNFSDDNEFLAASSSNKTVHIFKLGKPNAENSSAAATNSDDDEGEADSDDGADDDGVGDSDDTRSTVSIESFDNGSHQTREPIVDSSRKTVGRMIRKSSQNLSRKAAKALGSYFPKKVTSILEPRRHFASLKIPIESGSNLKTICTIGEPLTLDISDYPELFSGSRTMAQSASISANSSDSSLTRNSNFVKMIPIRVVSSEGYMYNYVLDPERGGDCLLLSQYPLLMD</sequence>
<comment type="function">
    <text evidence="1">The PI(3,5)P2 regulatory complex regulates both the synthesis and turnover of phosphatidylinositol 3,5-bisphosphate (PtdIns(3,5)P2). Necessary for proper vacuole morphology. Plays an important role in osmotically-induced vacuole fragmentation. Required for cytoplasm to vacuole transport (Cvt) vesicle formation, pexophagy and starvation-induced autophagy. Involved in correct ATG9 trafficking to the pre-autophagosomal structure. Might also be involved in premeiotic DNA replication (By similarity).</text>
</comment>
<comment type="subunit">
    <text evidence="1">Component of the PI(3,5)P2 regulatory complex.</text>
</comment>
<comment type="subcellular location">
    <subcellularLocation>
        <location evidence="1">Preautophagosomal structure membrane</location>
        <topology evidence="1">Peripheral membrane protein</topology>
    </subcellularLocation>
    <subcellularLocation>
        <location evidence="1">Vacuole membrane</location>
        <topology evidence="1">Peripheral membrane protein</topology>
    </subcellularLocation>
    <subcellularLocation>
        <location evidence="1">Endosome membrane</location>
        <topology evidence="1">Peripheral membrane protein</topology>
    </subcellularLocation>
</comment>
<comment type="domain">
    <text evidence="1">The N-terminus might form a beta-propeller domain involved in specific binding to phosphatidylinositol 3,5-bisphosphate (PIP2), leading to the association of the protein to the membrane.</text>
</comment>
<comment type="domain">
    <text evidence="2">The L/FRRG motif is essential for the cytoplasm to vacuole transport (Cvt) pathway, for the recruitment of ATG8 and ATG16 to the PAS in nutrient-rich medium, and for its recruitment to and dissociation from the PAS under starvation conditions.</text>
</comment>
<comment type="similarity">
    <text evidence="4">Belongs to the WD repeat PROPPIN family.</text>
</comment>
<gene>
    <name type="primary">ATG18</name>
    <name type="ordered locus">AAL119W</name>
</gene>